<accession>A2QA23</accession>
<proteinExistence type="inferred from homology"/>
<name>DBP6_ASPNC</name>
<feature type="chain" id="PRO_0000294658" description="ATP-dependent RNA helicase dbp6">
    <location>
        <begin position="1"/>
        <end position="593"/>
    </location>
</feature>
<feature type="domain" description="Helicase ATP-binding" evidence="2">
    <location>
        <begin position="157"/>
        <end position="361"/>
    </location>
</feature>
<feature type="domain" description="Helicase C-terminal" evidence="3">
    <location>
        <begin position="407"/>
        <end position="563"/>
    </location>
</feature>
<feature type="region of interest" description="Disordered" evidence="4">
    <location>
        <begin position="1"/>
        <end position="103"/>
    </location>
</feature>
<feature type="short sequence motif" description="Q motif">
    <location>
        <begin position="121"/>
        <end position="149"/>
    </location>
</feature>
<feature type="short sequence motif" description="DEAD box">
    <location>
        <begin position="285"/>
        <end position="288"/>
    </location>
</feature>
<feature type="compositionally biased region" description="Acidic residues" evidence="4">
    <location>
        <begin position="1"/>
        <end position="11"/>
    </location>
</feature>
<feature type="compositionally biased region" description="Basic and acidic residues" evidence="4">
    <location>
        <begin position="48"/>
        <end position="68"/>
    </location>
</feature>
<feature type="compositionally biased region" description="Low complexity" evidence="4">
    <location>
        <begin position="84"/>
        <end position="93"/>
    </location>
</feature>
<feature type="binding site" evidence="2">
    <location>
        <begin position="170"/>
        <end position="177"/>
    </location>
    <ligand>
        <name>ATP</name>
        <dbReference type="ChEBI" id="CHEBI:30616"/>
    </ligand>
</feature>
<gene>
    <name type="primary">dbp6</name>
    <name type="ORF">An01g09920</name>
</gene>
<dbReference type="EC" id="3.6.4.13"/>
<dbReference type="EMBL" id="AM269980">
    <property type="protein sequence ID" value="CAK37175.1"/>
    <property type="molecule type" value="Genomic_DNA"/>
</dbReference>
<dbReference type="SMR" id="A2QA23"/>
<dbReference type="EnsemblFungi" id="CAK37175">
    <property type="protein sequence ID" value="CAK37175"/>
    <property type="gene ID" value="An01g09920"/>
</dbReference>
<dbReference type="VEuPathDB" id="FungiDB:An01g09920"/>
<dbReference type="HOGENOM" id="CLU_003041_15_2_1"/>
<dbReference type="Proteomes" id="UP000006706">
    <property type="component" value="Chromosome 2R"/>
</dbReference>
<dbReference type="GO" id="GO:0005730">
    <property type="term" value="C:nucleolus"/>
    <property type="evidence" value="ECO:0007669"/>
    <property type="project" value="UniProtKB-SubCell"/>
</dbReference>
<dbReference type="GO" id="GO:0005524">
    <property type="term" value="F:ATP binding"/>
    <property type="evidence" value="ECO:0007669"/>
    <property type="project" value="UniProtKB-KW"/>
</dbReference>
<dbReference type="GO" id="GO:0016887">
    <property type="term" value="F:ATP hydrolysis activity"/>
    <property type="evidence" value="ECO:0007669"/>
    <property type="project" value="RHEA"/>
</dbReference>
<dbReference type="GO" id="GO:0003723">
    <property type="term" value="F:RNA binding"/>
    <property type="evidence" value="ECO:0007669"/>
    <property type="project" value="UniProtKB-KW"/>
</dbReference>
<dbReference type="GO" id="GO:0003724">
    <property type="term" value="F:RNA helicase activity"/>
    <property type="evidence" value="ECO:0007669"/>
    <property type="project" value="UniProtKB-EC"/>
</dbReference>
<dbReference type="GO" id="GO:0006364">
    <property type="term" value="P:rRNA processing"/>
    <property type="evidence" value="ECO:0007669"/>
    <property type="project" value="UniProtKB-KW"/>
</dbReference>
<dbReference type="CDD" id="cd17956">
    <property type="entry name" value="DEADc_DDX51"/>
    <property type="match status" value="1"/>
</dbReference>
<dbReference type="CDD" id="cd18787">
    <property type="entry name" value="SF2_C_DEAD"/>
    <property type="match status" value="1"/>
</dbReference>
<dbReference type="Gene3D" id="3.40.50.300">
    <property type="entry name" value="P-loop containing nucleotide triphosphate hydrolases"/>
    <property type="match status" value="2"/>
</dbReference>
<dbReference type="InterPro" id="IPR011545">
    <property type="entry name" value="DEAD/DEAH_box_helicase_dom"/>
</dbReference>
<dbReference type="InterPro" id="IPR014001">
    <property type="entry name" value="Helicase_ATP-bd"/>
</dbReference>
<dbReference type="InterPro" id="IPR001650">
    <property type="entry name" value="Helicase_C-like"/>
</dbReference>
<dbReference type="InterPro" id="IPR027417">
    <property type="entry name" value="P-loop_NTPase"/>
</dbReference>
<dbReference type="InterPro" id="IPR000629">
    <property type="entry name" value="RNA-helicase_DEAD-box_CS"/>
</dbReference>
<dbReference type="InterPro" id="IPR014014">
    <property type="entry name" value="RNA_helicase_DEAD_Q_motif"/>
</dbReference>
<dbReference type="PANTHER" id="PTHR24031">
    <property type="entry name" value="RNA HELICASE"/>
    <property type="match status" value="1"/>
</dbReference>
<dbReference type="Pfam" id="PF00270">
    <property type="entry name" value="DEAD"/>
    <property type="match status" value="1"/>
</dbReference>
<dbReference type="Pfam" id="PF00271">
    <property type="entry name" value="Helicase_C"/>
    <property type="match status" value="1"/>
</dbReference>
<dbReference type="SMART" id="SM00487">
    <property type="entry name" value="DEXDc"/>
    <property type="match status" value="1"/>
</dbReference>
<dbReference type="SMART" id="SM00490">
    <property type="entry name" value="HELICc"/>
    <property type="match status" value="1"/>
</dbReference>
<dbReference type="SUPFAM" id="SSF52540">
    <property type="entry name" value="P-loop containing nucleoside triphosphate hydrolases"/>
    <property type="match status" value="1"/>
</dbReference>
<dbReference type="PROSITE" id="PS00039">
    <property type="entry name" value="DEAD_ATP_HELICASE"/>
    <property type="match status" value="1"/>
</dbReference>
<dbReference type="PROSITE" id="PS51192">
    <property type="entry name" value="HELICASE_ATP_BIND_1"/>
    <property type="match status" value="1"/>
</dbReference>
<dbReference type="PROSITE" id="PS51194">
    <property type="entry name" value="HELICASE_CTER"/>
    <property type="match status" value="1"/>
</dbReference>
<dbReference type="PROSITE" id="PS51195">
    <property type="entry name" value="Q_MOTIF"/>
    <property type="match status" value="1"/>
</dbReference>
<comment type="function">
    <text evidence="1">ATP-binding RNA helicase involved in the biogenesis of 60S ribosomal subunits and is required for the normal formation of 25S and 5.8S rRNAs.</text>
</comment>
<comment type="catalytic activity">
    <reaction>
        <text>ATP + H2O = ADP + phosphate + H(+)</text>
        <dbReference type="Rhea" id="RHEA:13065"/>
        <dbReference type="ChEBI" id="CHEBI:15377"/>
        <dbReference type="ChEBI" id="CHEBI:15378"/>
        <dbReference type="ChEBI" id="CHEBI:30616"/>
        <dbReference type="ChEBI" id="CHEBI:43474"/>
        <dbReference type="ChEBI" id="CHEBI:456216"/>
        <dbReference type="EC" id="3.6.4.13"/>
    </reaction>
</comment>
<comment type="subunit">
    <text evidence="1">Associated with pre-ribosomal particles.</text>
</comment>
<comment type="subcellular location">
    <subcellularLocation>
        <location evidence="1">Nucleus</location>
        <location evidence="1">Nucleolus</location>
    </subcellularLocation>
</comment>
<comment type="domain">
    <text>The Q motif is unique to and characteristic of the DEAD box family of RNA helicases and controls ATP binding and hydrolysis.</text>
</comment>
<comment type="similarity">
    <text evidence="5">Belongs to the DEAD box helicase family. DDX51/DBP6 subfamily.</text>
</comment>
<keyword id="KW-0067">ATP-binding</keyword>
<keyword id="KW-0347">Helicase</keyword>
<keyword id="KW-0378">Hydrolase</keyword>
<keyword id="KW-0547">Nucleotide-binding</keyword>
<keyword id="KW-0539">Nucleus</keyword>
<keyword id="KW-1185">Reference proteome</keyword>
<keyword id="KW-0690">Ribosome biogenesis</keyword>
<keyword id="KW-0694">RNA-binding</keyword>
<keyword id="KW-0698">rRNA processing</keyword>
<evidence type="ECO:0000250" key="1"/>
<evidence type="ECO:0000255" key="2">
    <source>
        <dbReference type="PROSITE-ProRule" id="PRU00541"/>
    </source>
</evidence>
<evidence type="ECO:0000255" key="3">
    <source>
        <dbReference type="PROSITE-ProRule" id="PRU00542"/>
    </source>
</evidence>
<evidence type="ECO:0000256" key="4">
    <source>
        <dbReference type="SAM" id="MobiDB-lite"/>
    </source>
</evidence>
<evidence type="ECO:0000305" key="5"/>
<sequence length="593" mass="64576">MKDADDSEEVKEEQAKGTKKGRKSSEPAATENDDDKPTKNKFAGILSKFERSKKARELEKTRESTKDEDSTEPTTAEPVIAQGLEPLPQPEAAPEQDEMPTYSSLPPWLANPLRASAQERRKFADLGIDSSLLRVLEDNGYREAFAVQSTVIPLLLQGPTNHPGDLCISAATGSGKTLSYVLPLVTALKPLPAPRLRGLIVVPTRELVKQAREACELCAAGSGLRVASAVGNVAIKDEQRESLPGYVHRSEPNVDILICTPGRLVDHLRYTKGFTLKNLEWLVIDEADRLLNESFQEWVDVVMTSLDARKAPDAFGFSGNFLSGLGLPIQSKEPRKVVLSATMTRDVTKLNSLRLANPKLVVIGSDAAATEDESGGVAPSDEQFTLPPTLEEHTVSVGDGSQKPLYLLRLLLSHIKLETKILVFTKSSESASRLARLLALLEPSLSDRIGTIIKSNKSSASRKTLTAYRRGKISVIIATDRASRGLDLRSLTHVVNYDVPASITTYVHRVGRTARAGQKGSAWTLVAHREGKWFASQIAKGSDGKITRSTKVGKVQFKLDNMKEVKARYASALDLLEKEVKTGGTKASKPSAQ</sequence>
<reference key="1">
    <citation type="journal article" date="2007" name="Nat. Biotechnol.">
        <title>Genome sequencing and analysis of the versatile cell factory Aspergillus niger CBS 513.88.</title>
        <authorList>
            <person name="Pel H.J."/>
            <person name="de Winde J.H."/>
            <person name="Archer D.B."/>
            <person name="Dyer P.S."/>
            <person name="Hofmann G."/>
            <person name="Schaap P.J."/>
            <person name="Turner G."/>
            <person name="de Vries R.P."/>
            <person name="Albang R."/>
            <person name="Albermann K."/>
            <person name="Andersen M.R."/>
            <person name="Bendtsen J.D."/>
            <person name="Benen J.A.E."/>
            <person name="van den Berg M."/>
            <person name="Breestraat S."/>
            <person name="Caddick M.X."/>
            <person name="Contreras R."/>
            <person name="Cornell M."/>
            <person name="Coutinho P.M."/>
            <person name="Danchin E.G.J."/>
            <person name="Debets A.J.M."/>
            <person name="Dekker P."/>
            <person name="van Dijck P.W.M."/>
            <person name="van Dijk A."/>
            <person name="Dijkhuizen L."/>
            <person name="Driessen A.J.M."/>
            <person name="d'Enfert C."/>
            <person name="Geysens S."/>
            <person name="Goosen C."/>
            <person name="Groot G.S.P."/>
            <person name="de Groot P.W.J."/>
            <person name="Guillemette T."/>
            <person name="Henrissat B."/>
            <person name="Herweijer M."/>
            <person name="van den Hombergh J.P.T.W."/>
            <person name="van den Hondel C.A.M.J.J."/>
            <person name="van der Heijden R.T.J.M."/>
            <person name="van der Kaaij R.M."/>
            <person name="Klis F.M."/>
            <person name="Kools H.J."/>
            <person name="Kubicek C.P."/>
            <person name="van Kuyk P.A."/>
            <person name="Lauber J."/>
            <person name="Lu X."/>
            <person name="van der Maarel M.J.E.C."/>
            <person name="Meulenberg R."/>
            <person name="Menke H."/>
            <person name="Mortimer M.A."/>
            <person name="Nielsen J."/>
            <person name="Oliver S.G."/>
            <person name="Olsthoorn M."/>
            <person name="Pal K."/>
            <person name="van Peij N.N.M.E."/>
            <person name="Ram A.F.J."/>
            <person name="Rinas U."/>
            <person name="Roubos J.A."/>
            <person name="Sagt C.M.J."/>
            <person name="Schmoll M."/>
            <person name="Sun J."/>
            <person name="Ussery D."/>
            <person name="Varga J."/>
            <person name="Vervecken W."/>
            <person name="van de Vondervoort P.J.J."/>
            <person name="Wedler H."/>
            <person name="Woesten H.A.B."/>
            <person name="Zeng A.-P."/>
            <person name="van Ooyen A.J.J."/>
            <person name="Visser J."/>
            <person name="Stam H."/>
        </authorList>
    </citation>
    <scope>NUCLEOTIDE SEQUENCE [LARGE SCALE GENOMIC DNA]</scope>
    <source>
        <strain>ATCC MYA-4892 / CBS 513.88 / FGSC A1513</strain>
    </source>
</reference>
<organism>
    <name type="scientific">Aspergillus niger (strain ATCC MYA-4892 / CBS 513.88 / FGSC A1513)</name>
    <dbReference type="NCBI Taxonomy" id="425011"/>
    <lineage>
        <taxon>Eukaryota</taxon>
        <taxon>Fungi</taxon>
        <taxon>Dikarya</taxon>
        <taxon>Ascomycota</taxon>
        <taxon>Pezizomycotina</taxon>
        <taxon>Eurotiomycetes</taxon>
        <taxon>Eurotiomycetidae</taxon>
        <taxon>Eurotiales</taxon>
        <taxon>Aspergillaceae</taxon>
        <taxon>Aspergillus</taxon>
        <taxon>Aspergillus subgen. Circumdati</taxon>
    </lineage>
</organism>
<protein>
    <recommendedName>
        <fullName>ATP-dependent RNA helicase dbp6</fullName>
        <ecNumber>3.6.4.13</ecNumber>
    </recommendedName>
</protein>